<sequence length="596" mass="65305">MAGRRVNVNVGVLGHIDSGKTALARALSTTASTAAFDKQPQSRERGITLDLGFSCFSVPLPARLRSSLPEFQAAPEAEPEPGEPLLQVTLVDCPGHASLIRTIIGGAQIIDLMMLVIDVTKGMQTQSAECLVIGQIACQKLVVVLNKIDLLPEGKRQAAIDKMTKKMQKTLENTKFRGAPIIPVAAKPGGPEAPETEAPQGIPELIELLTSQISIPTRDPSGPFLMSVDHCFSIKGQGTVMTGTILSGSISLGDSVEIPALKVVKKVKSMQMFHMPITSAMQGDRLGICVTQFDPKLLERGLVCAPESLHTVHAALISVEKIPYFRGPLQTKAKFHITVGHETVMGRLMFFSPAPDNFDQEPILDSFNFSQEYLFQEQYLSKDLTPAVTDNDEADKKAGQATEGHCPRQQWALVEFEKPVTCPRLCLVIGSRLDADIHTNTCRLAFHGILLHGLEDRNYADSFLPRLKVYKLKHKHGLVERAMDDYSVIGRSLFKKETNIQLFVGLKVHLSTGELGIIDSAFGQSGKFKIHIPGGLSPESKKILTPALKKRARAGRGEATRQEESAERSEPSQHVVLSLTFKRYVFDTHKRMVQSP</sequence>
<accession>P57772</accession>
<accession>Q96HZ6</accession>
<feature type="chain" id="PRO_0000091478" description="Selenocysteine-specific elongation factor">
    <location>
        <begin position="1"/>
        <end position="596"/>
    </location>
</feature>
<feature type="domain" description="tr-type G" evidence="3">
    <location>
        <begin position="5"/>
        <end position="217"/>
    </location>
</feature>
<feature type="region of interest" description="G1" evidence="3">
    <location>
        <begin position="14"/>
        <end position="21"/>
    </location>
</feature>
<feature type="region of interest" description="G2" evidence="3">
    <location>
        <begin position="46"/>
        <end position="50"/>
    </location>
</feature>
<feature type="region of interest" description="G3" evidence="3">
    <location>
        <begin position="92"/>
        <end position="95"/>
    </location>
</feature>
<feature type="region of interest" description="G4" evidence="3">
    <location>
        <begin position="146"/>
        <end position="149"/>
    </location>
</feature>
<feature type="region of interest" description="G5" evidence="3">
    <location>
        <begin position="185"/>
        <end position="187"/>
    </location>
</feature>
<feature type="region of interest" description="Disordered" evidence="4">
    <location>
        <begin position="548"/>
        <end position="573"/>
    </location>
</feature>
<feature type="short sequence motif" description="Nuclear localization signal" evidence="2">
    <location>
        <begin position="547"/>
        <end position="553"/>
    </location>
</feature>
<feature type="compositionally biased region" description="Basic and acidic residues" evidence="4">
    <location>
        <begin position="555"/>
        <end position="571"/>
    </location>
</feature>
<feature type="binding site" evidence="5 13">
    <location>
        <position position="19"/>
    </location>
    <ligand>
        <name>GDP</name>
        <dbReference type="ChEBI" id="CHEBI:58189"/>
    </ligand>
</feature>
<feature type="binding site" evidence="11">
    <location>
        <position position="19"/>
    </location>
    <ligand>
        <name>GTP</name>
        <dbReference type="ChEBI" id="CHEBI:37565"/>
    </ligand>
</feature>
<feature type="binding site" evidence="5 13">
    <location>
        <position position="21"/>
    </location>
    <ligand>
        <name>GDP</name>
        <dbReference type="ChEBI" id="CHEBI:58189"/>
    </ligand>
</feature>
<feature type="binding site" evidence="11">
    <location>
        <position position="21"/>
    </location>
    <ligand>
        <name>GTP</name>
        <dbReference type="ChEBI" id="CHEBI:37565"/>
    </ligand>
</feature>
<feature type="binding site" evidence="5 14">
    <location>
        <position position="21"/>
    </location>
    <ligand>
        <name>Mg(2+)</name>
        <dbReference type="ChEBI" id="CHEBI:18420"/>
    </ligand>
</feature>
<feature type="binding site" evidence="5 13">
    <location>
        <position position="22"/>
    </location>
    <ligand>
        <name>GDP</name>
        <dbReference type="ChEBI" id="CHEBI:58189"/>
    </ligand>
</feature>
<feature type="binding site" evidence="11">
    <location>
        <position position="22"/>
    </location>
    <ligand>
        <name>GTP</name>
        <dbReference type="ChEBI" id="CHEBI:37565"/>
    </ligand>
</feature>
<feature type="binding site" evidence="5 14">
    <location>
        <position position="48"/>
    </location>
    <ligand>
        <name>Mg(2+)</name>
        <dbReference type="ChEBI" id="CHEBI:18420"/>
    </ligand>
</feature>
<feature type="binding site" evidence="5 14">
    <location>
        <position position="92"/>
    </location>
    <ligand>
        <name>Mg(2+)</name>
        <dbReference type="ChEBI" id="CHEBI:18420"/>
    </ligand>
</feature>
<feature type="binding site" evidence="5 13">
    <location>
        <position position="149"/>
    </location>
    <ligand>
        <name>GDP</name>
        <dbReference type="ChEBI" id="CHEBI:58189"/>
    </ligand>
</feature>
<feature type="binding site" evidence="11">
    <location>
        <position position="149"/>
    </location>
    <ligand>
        <name>GTP</name>
        <dbReference type="ChEBI" id="CHEBI:37565"/>
    </ligand>
</feature>
<feature type="binding site" evidence="6 13">
    <location>
        <position position="187"/>
    </location>
    <ligand>
        <name>GDP</name>
        <dbReference type="ChEBI" id="CHEBI:58189"/>
    </ligand>
</feature>
<feature type="binding site" evidence="11">
    <location>
        <position position="187"/>
    </location>
    <ligand>
        <name>GTP</name>
        <dbReference type="ChEBI" id="CHEBI:37565"/>
    </ligand>
</feature>
<feature type="modified residue" description="Phosphoserine" evidence="17">
    <location>
        <position position="537"/>
    </location>
</feature>
<feature type="modified residue" description="Phosphothreonine" evidence="1">
    <location>
        <position position="545"/>
    </location>
</feature>
<feature type="modified residue" description="Omega-N-methylarginine" evidence="1">
    <location>
        <position position="556"/>
    </location>
</feature>
<feature type="splice variant" id="VSP_057185" description="In isoform 2." evidence="8">
    <original>MAGRRVNVNVGVLGHIDSGKTALARALSTTA</original>
    <variation>MASC</variation>
    <location>
        <begin position="1"/>
        <end position="31"/>
    </location>
</feature>
<feature type="sequence variant" id="VAR_090440" description="In NEDPSB; likely benign; no effect on selenocysteine incorporation in selenoproteins." evidence="7">
    <original>A</original>
    <variation>V</variation>
    <location>
        <position position="35"/>
    </location>
</feature>
<feature type="sequence variant" id="VAR_090441" description="In NEDPSB; likely pathogenic; decreased selenocysteine incorporation in selenoproteins." evidence="7">
    <original>P</original>
    <variation>T</variation>
    <location>
        <position position="194"/>
    </location>
</feature>
<feature type="sequence variant" id="VAR_090442" description="In NEDPSB; likely pathogenic; decreased selenocysteine incorporation in selenoproteins." evidence="7">
    <original>R</original>
    <variation>Q</variation>
    <location>
        <position position="285"/>
    </location>
</feature>
<feature type="sequence variant" id="VAR_090443" description="In NEDPSB; likely pathogenic; decreased selenocysteine incorporation in selenoproteins." evidence="7">
    <original>D</original>
    <variation>A</variation>
    <location>
        <position position="390"/>
    </location>
</feature>
<feature type="sequence variant" id="VAR_090444" description="In NEDPSB; likely pathogenic; decreased selenocysteine incorporation in selenoproteins." evidence="7">
    <location>
        <begin position="426"/>
        <end position="596"/>
    </location>
</feature>
<feature type="sequence variant" id="VAR_055712" description="In dbSNP:rs34326479.">
    <original>A</original>
    <variation>V</variation>
    <location>
        <position position="435"/>
    </location>
</feature>
<feature type="mutagenesis site" description="Abolished GTPase activity." evidence="6">
    <original>H</original>
    <variation>A</variation>
    <location>
        <position position="96"/>
    </location>
</feature>
<feature type="mutagenesis site" description="Abolished ability to mediate insertion of selenocysteine." evidence="5">
    <original>D</original>
    <variation>A</variation>
    <location>
        <position position="229"/>
    </location>
</feature>
<feature type="mutagenesis site" description="Abolished ability to mediate insertion of selenocysteine." evidence="5">
    <original>H</original>
    <variation>A</variation>
    <location>
        <position position="230"/>
    </location>
</feature>
<feature type="mutagenesis site" description="Abolished ability to mediate insertion of selenocysteine." evidence="5">
    <original>R</original>
    <variation>A</variation>
    <location>
        <position position="285"/>
    </location>
</feature>
<feature type="mutagenesis site" description="Abolished ability to mediate insertion of selenocysteine." evidence="5">
    <original>R</original>
    <variation>N</variation>
    <location>
        <position position="285"/>
    </location>
</feature>
<feature type="mutagenesis site" description="Does not affect ability to mediate insertion of selenocysteine." evidence="5">
    <original>RY</original>
    <variation>AA</variation>
    <location>
        <begin position="583"/>
        <end position="584"/>
    </location>
</feature>
<feature type="sequence conflict" description="In Ref. 3; AAG13375." evidence="10" ref="3">
    <original>L</original>
    <variation>F</variation>
    <location>
        <position position="577"/>
    </location>
</feature>
<feature type="strand" evidence="19">
    <location>
        <begin position="5"/>
        <end position="19"/>
    </location>
</feature>
<feature type="helix" evidence="19">
    <location>
        <begin position="20"/>
        <end position="30"/>
    </location>
</feature>
<feature type="strand" evidence="19">
    <location>
        <begin position="52"/>
        <end position="59"/>
    </location>
</feature>
<feature type="helix" evidence="19">
    <location>
        <begin position="62"/>
        <end position="67"/>
    </location>
</feature>
<feature type="strand" evidence="19">
    <location>
        <begin position="85"/>
        <end position="92"/>
    </location>
</feature>
<feature type="strand" evidence="18">
    <location>
        <begin position="94"/>
        <end position="96"/>
    </location>
</feature>
<feature type="helix" evidence="19">
    <location>
        <begin position="97"/>
        <end position="99"/>
    </location>
</feature>
<feature type="helix" evidence="19">
    <location>
        <begin position="100"/>
        <end position="107"/>
    </location>
</feature>
<feature type="strand" evidence="19">
    <location>
        <begin position="111"/>
        <end position="118"/>
    </location>
</feature>
<feature type="turn" evidence="19">
    <location>
        <begin position="119"/>
        <end position="121"/>
    </location>
</feature>
<feature type="helix" evidence="19">
    <location>
        <begin position="125"/>
        <end position="137"/>
    </location>
</feature>
<feature type="strand" evidence="19">
    <location>
        <begin position="139"/>
        <end position="146"/>
    </location>
</feature>
<feature type="strand" evidence="20">
    <location>
        <begin position="149"/>
        <end position="151"/>
    </location>
</feature>
<feature type="turn" evidence="20">
    <location>
        <begin position="153"/>
        <end position="155"/>
    </location>
</feature>
<feature type="helix" evidence="19">
    <location>
        <begin position="156"/>
        <end position="170"/>
    </location>
</feature>
<feature type="strand" evidence="19">
    <location>
        <begin position="172"/>
        <end position="175"/>
    </location>
</feature>
<feature type="strand" evidence="19">
    <location>
        <begin position="181"/>
        <end position="183"/>
    </location>
</feature>
<feature type="strand" evidence="19">
    <location>
        <begin position="185"/>
        <end position="187"/>
    </location>
</feature>
<feature type="helix" evidence="19">
    <location>
        <begin position="202"/>
        <end position="212"/>
    </location>
</feature>
<feature type="strand" evidence="19">
    <location>
        <begin position="225"/>
        <end position="233"/>
    </location>
</feature>
<feature type="strand" evidence="19">
    <location>
        <begin position="235"/>
        <end position="237"/>
    </location>
</feature>
<feature type="strand" evidence="19">
    <location>
        <begin position="239"/>
        <end position="251"/>
    </location>
</feature>
<feature type="strand" evidence="19">
    <location>
        <begin position="255"/>
        <end position="257"/>
    </location>
</feature>
<feature type="turn" evidence="19">
    <location>
        <begin position="259"/>
        <end position="261"/>
    </location>
</feature>
<feature type="strand" evidence="19">
    <location>
        <begin position="264"/>
        <end position="272"/>
    </location>
</feature>
<feature type="strand" evidence="18">
    <location>
        <begin position="273"/>
        <end position="275"/>
    </location>
</feature>
<feature type="strand" evidence="19">
    <location>
        <begin position="278"/>
        <end position="281"/>
    </location>
</feature>
<feature type="strand" evidence="19">
    <location>
        <begin position="285"/>
        <end position="291"/>
    </location>
</feature>
<feature type="helix" evidence="19">
    <location>
        <begin position="295"/>
        <end position="297"/>
    </location>
</feature>
<feature type="strand" evidence="19">
    <location>
        <begin position="299"/>
        <end position="305"/>
    </location>
</feature>
<feature type="strand" evidence="19">
    <location>
        <begin position="309"/>
        <end position="317"/>
    </location>
</feature>
<feature type="strand" evidence="19">
    <location>
        <begin position="319"/>
        <end position="321"/>
    </location>
</feature>
<feature type="strand" evidence="20">
    <location>
        <begin position="330"/>
        <end position="332"/>
    </location>
</feature>
<feature type="strand" evidence="19">
    <location>
        <begin position="334"/>
        <end position="339"/>
    </location>
</feature>
<feature type="strand" evidence="19">
    <location>
        <begin position="342"/>
        <end position="347"/>
    </location>
</feature>
<feature type="strand" evidence="19">
    <location>
        <begin position="350"/>
        <end position="353"/>
    </location>
</feature>
<feature type="helix" evidence="19">
    <location>
        <begin position="355"/>
        <end position="357"/>
    </location>
</feature>
<feature type="strand" evidence="19">
    <location>
        <begin position="358"/>
        <end position="360"/>
    </location>
</feature>
<feature type="strand" evidence="19">
    <location>
        <begin position="370"/>
        <end position="378"/>
    </location>
</feature>
<feature type="strand" evidence="19">
    <location>
        <begin position="410"/>
        <end position="422"/>
    </location>
</feature>
<feature type="strand" evidence="19">
    <location>
        <begin position="427"/>
        <end position="431"/>
    </location>
</feature>
<feature type="strand" evidence="19">
    <location>
        <begin position="444"/>
        <end position="454"/>
    </location>
</feature>
<feature type="helix" evidence="19">
    <location>
        <begin position="459"/>
        <end position="462"/>
    </location>
</feature>
<feature type="helix" evidence="19">
    <location>
        <begin position="464"/>
        <end position="466"/>
    </location>
</feature>
<feature type="strand" evidence="19">
    <location>
        <begin position="468"/>
        <end position="481"/>
    </location>
</feature>
<feature type="strand" evidence="19">
    <location>
        <begin position="483"/>
        <end position="492"/>
    </location>
</feature>
<feature type="helix" evidence="19">
    <location>
        <begin position="500"/>
        <end position="503"/>
    </location>
</feature>
<feature type="strand" evidence="19">
    <location>
        <begin position="507"/>
        <end position="510"/>
    </location>
</feature>
<feature type="turn" evidence="20">
    <location>
        <begin position="511"/>
        <end position="513"/>
    </location>
</feature>
<feature type="strand" evidence="19">
    <location>
        <begin position="515"/>
        <end position="518"/>
    </location>
</feature>
<feature type="helix" evidence="19">
    <location>
        <begin position="538"/>
        <end position="542"/>
    </location>
</feature>
<feature type="strand" evidence="19">
    <location>
        <begin position="575"/>
        <end position="584"/>
    </location>
</feature>
<feature type="helix" evidence="19">
    <location>
        <begin position="586"/>
        <end position="588"/>
    </location>
</feature>
<proteinExistence type="evidence at protein level"/>
<reference key="1">
    <citation type="journal article" date="2006" name="Nature">
        <title>The DNA sequence, annotation and analysis of human chromosome 3.</title>
        <authorList>
            <person name="Muzny D.M."/>
            <person name="Scherer S.E."/>
            <person name="Kaul R."/>
            <person name="Wang J."/>
            <person name="Yu J."/>
            <person name="Sudbrak R."/>
            <person name="Buhay C.J."/>
            <person name="Chen R."/>
            <person name="Cree A."/>
            <person name="Ding Y."/>
            <person name="Dugan-Rocha S."/>
            <person name="Gill R."/>
            <person name="Gunaratne P."/>
            <person name="Harris R.A."/>
            <person name="Hawes A.C."/>
            <person name="Hernandez J."/>
            <person name="Hodgson A.V."/>
            <person name="Hume J."/>
            <person name="Jackson A."/>
            <person name="Khan Z.M."/>
            <person name="Kovar-Smith C."/>
            <person name="Lewis L.R."/>
            <person name="Lozado R.J."/>
            <person name="Metzker M.L."/>
            <person name="Milosavljevic A."/>
            <person name="Miner G.R."/>
            <person name="Morgan M.B."/>
            <person name="Nazareth L.V."/>
            <person name="Scott G."/>
            <person name="Sodergren E."/>
            <person name="Song X.-Z."/>
            <person name="Steffen D."/>
            <person name="Wei S."/>
            <person name="Wheeler D.A."/>
            <person name="Wright M.W."/>
            <person name="Worley K.C."/>
            <person name="Yuan Y."/>
            <person name="Zhang Z."/>
            <person name="Adams C.Q."/>
            <person name="Ansari-Lari M.A."/>
            <person name="Ayele M."/>
            <person name="Brown M.J."/>
            <person name="Chen G."/>
            <person name="Chen Z."/>
            <person name="Clendenning J."/>
            <person name="Clerc-Blankenburg K.P."/>
            <person name="Chen R."/>
            <person name="Chen Z."/>
            <person name="Davis C."/>
            <person name="Delgado O."/>
            <person name="Dinh H.H."/>
            <person name="Dong W."/>
            <person name="Draper H."/>
            <person name="Ernst S."/>
            <person name="Fu G."/>
            <person name="Gonzalez-Garay M.L."/>
            <person name="Garcia D.K."/>
            <person name="Gillett W."/>
            <person name="Gu J."/>
            <person name="Hao B."/>
            <person name="Haugen E."/>
            <person name="Havlak P."/>
            <person name="He X."/>
            <person name="Hennig S."/>
            <person name="Hu S."/>
            <person name="Huang W."/>
            <person name="Jackson L.R."/>
            <person name="Jacob L.S."/>
            <person name="Kelly S.H."/>
            <person name="Kube M."/>
            <person name="Levy R."/>
            <person name="Li Z."/>
            <person name="Liu B."/>
            <person name="Liu J."/>
            <person name="Liu W."/>
            <person name="Lu J."/>
            <person name="Maheshwari M."/>
            <person name="Nguyen B.-V."/>
            <person name="Okwuonu G.O."/>
            <person name="Palmeiri A."/>
            <person name="Pasternak S."/>
            <person name="Perez L.M."/>
            <person name="Phelps K.A."/>
            <person name="Plopper F.J."/>
            <person name="Qiang B."/>
            <person name="Raymond C."/>
            <person name="Rodriguez R."/>
            <person name="Saenphimmachak C."/>
            <person name="Santibanez J."/>
            <person name="Shen H."/>
            <person name="Shen Y."/>
            <person name="Subramanian S."/>
            <person name="Tabor P.E."/>
            <person name="Verduzco D."/>
            <person name="Waldron L."/>
            <person name="Wang J."/>
            <person name="Wang J."/>
            <person name="Wang Q."/>
            <person name="Williams G.A."/>
            <person name="Wong G.K.-S."/>
            <person name="Yao Z."/>
            <person name="Zhang J."/>
            <person name="Zhang X."/>
            <person name="Zhao G."/>
            <person name="Zhou J."/>
            <person name="Zhou Y."/>
            <person name="Nelson D."/>
            <person name="Lehrach H."/>
            <person name="Reinhardt R."/>
            <person name="Naylor S.L."/>
            <person name="Yang H."/>
            <person name="Olson M."/>
            <person name="Weinstock G."/>
            <person name="Gibbs R.A."/>
        </authorList>
    </citation>
    <scope>NUCLEOTIDE SEQUENCE [LARGE SCALE GENOMIC DNA]</scope>
</reference>
<reference key="2">
    <citation type="journal article" date="2004" name="Genome Res.">
        <title>The status, quality, and expansion of the NIH full-length cDNA project: the Mammalian Gene Collection (MGC).</title>
        <authorList>
            <consortium name="The MGC Project Team"/>
        </authorList>
    </citation>
    <scope>NUCLEOTIDE SEQUENCE [LARGE SCALE MRNA] (ISOFORM 2)</scope>
    <source>
        <tissue>Muscle</tissue>
    </source>
</reference>
<reference key="3">
    <citation type="journal article" date="2000" name="EMBO J.">
        <title>Characterization of mSelB, a novel mammalian elongation factor for selenoprotein translation.</title>
        <authorList>
            <person name="Fagegaltier D."/>
            <person name="Hubert N."/>
            <person name="Yamada K."/>
            <person name="Mizutani T."/>
            <person name="Carbon P."/>
            <person name="Krol A."/>
        </authorList>
    </citation>
    <scope>NUCLEOTIDE SEQUENCE [MRNA] OF 71-596 (ISOFORM 1/2)</scope>
</reference>
<reference key="4">
    <citation type="journal article" date="2011" name="BMC Syst. Biol.">
        <title>Initial characterization of the human central proteome.</title>
        <authorList>
            <person name="Burkard T.R."/>
            <person name="Planyavsky M."/>
            <person name="Kaupe I."/>
            <person name="Breitwieser F.P."/>
            <person name="Buerckstuemmer T."/>
            <person name="Bennett K.L."/>
            <person name="Superti-Furga G."/>
            <person name="Colinge J."/>
        </authorList>
    </citation>
    <scope>IDENTIFICATION BY MASS SPECTROMETRY [LARGE SCALE ANALYSIS]</scope>
</reference>
<reference key="5">
    <citation type="journal article" date="2013" name="J. Proteome Res.">
        <title>Toward a comprehensive characterization of a human cancer cell phosphoproteome.</title>
        <authorList>
            <person name="Zhou H."/>
            <person name="Di Palma S."/>
            <person name="Preisinger C."/>
            <person name="Peng M."/>
            <person name="Polat A.N."/>
            <person name="Heck A.J."/>
            <person name="Mohammed S."/>
        </authorList>
    </citation>
    <scope>PHOSPHORYLATION [LARGE SCALE ANALYSIS] AT SER-537</scope>
    <scope>IDENTIFICATION BY MASS SPECTROMETRY [LARGE SCALE ANALYSIS]</scope>
    <source>
        <tissue>Cervix carcinoma</tissue>
        <tissue>Erythroleukemia</tissue>
    </source>
</reference>
<reference key="6">
    <citation type="journal article" date="2014" name="J. Proteomics">
        <title>An enzyme assisted RP-RPLC approach for in-depth analysis of human liver phosphoproteome.</title>
        <authorList>
            <person name="Bian Y."/>
            <person name="Song C."/>
            <person name="Cheng K."/>
            <person name="Dong M."/>
            <person name="Wang F."/>
            <person name="Huang J."/>
            <person name="Sun D."/>
            <person name="Wang L."/>
            <person name="Ye M."/>
            <person name="Zou H."/>
        </authorList>
    </citation>
    <scope>IDENTIFICATION BY MASS SPECTROMETRY [LARGE SCALE ANALYSIS]</scope>
    <source>
        <tissue>Liver</tissue>
    </source>
</reference>
<reference evidence="13 14 15" key="7">
    <citation type="journal article" date="2016" name="Nat. Commun.">
        <title>Crystal structures of the human elongation factor eEFSec suggest a non-canonical mechanism for selenocysteine incorporation.</title>
        <authorList>
            <person name="Dobosz-Bartoszek M."/>
            <person name="Pinkerton M.H."/>
            <person name="Otwinowski Z."/>
            <person name="Chakravarthy S."/>
            <person name="Soell D."/>
            <person name="Copeland P.R."/>
            <person name="Simonovic M."/>
        </authorList>
    </citation>
    <scope>X-RAY CRYSTALLOGRAPHY (2.72 ANGSTROMS) IN COMPLEX WITH GDP; MG(2+) AND MN(2+)</scope>
    <scope>FUNCTION</scope>
    <scope>CATALYTIC ACTIVITY</scope>
    <scope>COFACTOR</scope>
    <scope>MUTAGENESIS OF ASP-229; HIS-230; ARG-285 AND 583-ARG-TYR-584</scope>
</reference>
<reference evidence="16" key="8">
    <citation type="journal article" date="2022" name="Science">
        <title>Structure of the mammalian ribosome as it decodes the selenocysteine UGA codon.</title>
        <authorList>
            <person name="Hilal T."/>
            <person name="Killam B.Y."/>
            <person name="Grozdanovic M."/>
            <person name="Dobosz-Bartoszek M."/>
            <person name="Loerke J."/>
            <person name="Buerger J."/>
            <person name="Mielke T."/>
            <person name="Copeland P.R."/>
            <person name="Simonovic M."/>
            <person name="Spahn C.M.T."/>
        </authorList>
    </citation>
    <scope>STRUCTURE BY ELECTRON MICROSCOPY (2.80 ANGSTROMS) IN COMPLEX WITH SECISBP2 AND RIBOSOME</scope>
    <scope>FUNCTION</scope>
    <scope>CATALYTIC ACTIVITY</scope>
    <scope>MUTAGENESIS OF HIS-96</scope>
</reference>
<reference key="9">
    <citation type="journal article" date="2025" name="Am. J. Hum. Genet.">
        <title>EEFSEC deficiency: A selenopathy with early-onset neurodegeneration.</title>
        <authorList>
            <person name="Laugwitz L."/>
            <person name="Buchert R."/>
            <person name="Olguin P."/>
            <person name="Estiar M.A."/>
            <person name="Atanasova M."/>
            <person name="Jr W.M."/>
            <person name="Enssle J."/>
            <person name="Marsden B."/>
            <person name="Aviles J."/>
            <person name="Gonzalez-Gutierrez A."/>
            <person name="Candia N."/>
            <person name="Fabiano M."/>
            <person name="Morlot S."/>
            <person name="Peralta S."/>
            <person name="Groh A."/>
            <person name="Schillinger C."/>
            <person name="Kuehn C."/>
            <person name="Sofan L."/>
            <person name="Sturm M."/>
            <person name="Bender B."/>
            <person name="Tomaselli P.J."/>
            <person name="Diebold U."/>
            <person name="Mueller A.J."/>
            <person name="Spranger S."/>
            <person name="Fuchs M."/>
            <person name="Freua F."/>
            <person name="Melo U.S."/>
            <person name="Mattas L."/>
            <person name="Ashtiani S."/>
            <person name="Suchowersky O."/>
            <person name="Groeschel S."/>
            <person name="Rouleau G.A."/>
            <person name="Yosovich K."/>
            <person name="Michelson M."/>
            <person name="Leibovitz Z."/>
            <person name="Bilal M."/>
            <person name="Uctepe E."/>
            <person name="Yesilyurt A."/>
            <person name="Ozdogan O."/>
            <person name="Celik T."/>
            <person name="Kraegeloh-Mann I."/>
            <person name="Riess O."/>
            <person name="Rosewich H."/>
            <person name="Umair M."/>
            <person name="Lev D."/>
            <person name="Zuchner S."/>
            <person name="Schweizer U."/>
            <person name="Lynch D.S."/>
            <person name="Gan-Or Z."/>
            <person name="Haack T.B."/>
        </authorList>
    </citation>
    <scope>VARIANTS NEDPSB VAL-35; THR-194; GLN-285; ALA-390 AND 426-CYS--PRO-596 DEL</scope>
    <scope>CHARACTERIZATION OF VARIANTS NEDPSB VAL-35; THR-194; GLN-285; ALA-390 AND 426-CYS--PRO-596 DEL</scope>
    <scope>INVOLVEMENT IN NEDPSB</scope>
</reference>
<comment type="function">
    <text evidence="5 6">Translation factor required for the incorporation of the rare amino acid selenocysteine encoded by UGA codons (PubMed:27708257, PubMed:35709277). Replaces the eRF1-eRF3-GTP ternary complex for the insertion of selenocysteine directed by the UGA codon (PubMed:27708257, PubMed:35709277). Insertion of selenocysteine at UGA codons is mediated by SECISBP2 and EEFSEC: SECISBP2 (1) specifically binds the SECIS sequence once the 80S ribosome encounters an in-frame UGA codon and (2) contacts the RPS27A/eS31 of the 40S ribosome before ribosome stalling (PubMed:35709277). (3) GTP-bound EEFSEC then delivers selenocysteinyl-tRNA(Sec) to the 80S ribosome and adopts a preaccommodated state conformation (PubMed:35709277). (4) After GTP hydrolysis, EEFSEC dissociates from the assembly, selenocysteinyl-tRNA(Sec) accommodates, and peptide bond synthesis and selenoprotein elongation occur (PubMed:35709277).</text>
</comment>
<comment type="catalytic activity">
    <reaction evidence="5 6">
        <text>GTP + H2O = GDP + phosphate + H(+)</text>
        <dbReference type="Rhea" id="RHEA:19669"/>
        <dbReference type="ChEBI" id="CHEBI:15377"/>
        <dbReference type="ChEBI" id="CHEBI:15378"/>
        <dbReference type="ChEBI" id="CHEBI:37565"/>
        <dbReference type="ChEBI" id="CHEBI:43474"/>
        <dbReference type="ChEBI" id="CHEBI:58189"/>
    </reaction>
    <physiologicalReaction direction="left-to-right" evidence="5 6">
        <dbReference type="Rhea" id="RHEA:19670"/>
    </physiologicalReaction>
</comment>
<comment type="cofactor">
    <cofactor evidence="5">
        <name>Mg(2+)</name>
        <dbReference type="ChEBI" id="CHEBI:18420"/>
    </cofactor>
    <cofactor evidence="5">
        <name>Mn(2+)</name>
        <dbReference type="ChEBI" id="CHEBI:29035"/>
    </cofactor>
</comment>
<comment type="subcellular location">
    <subcellularLocation>
        <location evidence="10">Cytoplasm</location>
    </subcellularLocation>
    <subcellularLocation>
        <location evidence="10">Nucleus</location>
    </subcellularLocation>
</comment>
<comment type="alternative products">
    <event type="alternative splicing"/>
    <isoform>
        <id>P57772-1</id>
        <name>1</name>
        <sequence type="displayed"/>
    </isoform>
    <isoform>
        <id>P57772-2</id>
        <name>2</name>
        <sequence type="described" ref="VSP_057185"/>
    </isoform>
</comment>
<comment type="disease" evidence="7">
    <disease id="DI-07006">
        <name>Neurodevelopmental disorder with progressive spasticity and brain abnormalities</name>
        <acronym>NEDPSB</acronym>
        <description>An autosomal recessive disorder with onset in infancy or early childhood, and characterized by global developmental delay with intellectual disability, poor or absent speech, progressive spasticity, ataxia, and seizures. Brain imaging primarily shows cerebral and/or cerebellar hypoplasia with delayed myelination, and progressive cerebellar atrophy in about half of patients.</description>
        <dbReference type="MIM" id="621102"/>
    </disease>
    <text>The disease is caused by variants affecting the gene represented in this entry.</text>
</comment>
<comment type="similarity">
    <text evidence="3">Belongs to the TRAFAC class translation factor GTPase superfamily. Classic translation factor GTPase family. SelB subfamily.</text>
</comment>
<dbReference type="EC" id="3.6.5.-" evidence="5 6"/>
<dbReference type="EMBL" id="AL449214">
    <property type="status" value="NOT_ANNOTATED_CDS"/>
    <property type="molecule type" value="Genomic_DNA"/>
</dbReference>
<dbReference type="EMBL" id="AL449210">
    <property type="status" value="NOT_ANNOTATED_CDS"/>
    <property type="molecule type" value="Genomic_DNA"/>
</dbReference>
<dbReference type="EMBL" id="AL449217">
    <property type="status" value="NOT_ANNOTATED_CDS"/>
    <property type="molecule type" value="Genomic_DNA"/>
</dbReference>
<dbReference type="EMBL" id="BC007933">
    <property type="protein sequence ID" value="AAH07933.1"/>
    <property type="molecule type" value="mRNA"/>
</dbReference>
<dbReference type="EMBL" id="AF268872">
    <property type="protein sequence ID" value="AAG13375.1"/>
    <property type="molecule type" value="mRNA"/>
</dbReference>
<dbReference type="CCDS" id="CCDS33849.1">
    <molecule id="P57772-1"/>
</dbReference>
<dbReference type="RefSeq" id="NP_068756.2">
    <molecule id="P57772-1"/>
    <property type="nucleotide sequence ID" value="NM_021937.5"/>
</dbReference>
<dbReference type="PDB" id="5IZK">
    <property type="method" value="X-ray"/>
    <property type="resolution" value="3.25 A"/>
    <property type="chains" value="A/B=1-596"/>
</dbReference>
<dbReference type="PDB" id="5IZL">
    <property type="method" value="X-ray"/>
    <property type="resolution" value="2.72 A"/>
    <property type="chains" value="A/B=1-596"/>
</dbReference>
<dbReference type="PDB" id="5IZM">
    <property type="method" value="X-ray"/>
    <property type="resolution" value="3.40 A"/>
    <property type="chains" value="A/B=2-596"/>
</dbReference>
<dbReference type="PDB" id="7ZJW">
    <property type="method" value="EM"/>
    <property type="resolution" value="2.80 A"/>
    <property type="chains" value="E=1-596"/>
</dbReference>
<dbReference type="PDBsum" id="5IZK"/>
<dbReference type="PDBsum" id="5IZL"/>
<dbReference type="PDBsum" id="5IZM"/>
<dbReference type="PDBsum" id="7ZJW"/>
<dbReference type="EMDB" id="EMD-14751"/>
<dbReference type="SMR" id="P57772"/>
<dbReference type="BioGRID" id="121953">
    <property type="interactions" value="71"/>
</dbReference>
<dbReference type="FunCoup" id="P57772">
    <property type="interactions" value="763"/>
</dbReference>
<dbReference type="IntAct" id="P57772">
    <property type="interactions" value="28"/>
</dbReference>
<dbReference type="MINT" id="P57772"/>
<dbReference type="STRING" id="9606.ENSP00000254730"/>
<dbReference type="GlyGen" id="P57772">
    <property type="glycosylation" value="1 site, 1 O-linked glycan (1 site)"/>
</dbReference>
<dbReference type="iPTMnet" id="P57772"/>
<dbReference type="MetOSite" id="P57772"/>
<dbReference type="PhosphoSitePlus" id="P57772"/>
<dbReference type="SwissPalm" id="P57772"/>
<dbReference type="BioMuta" id="EEFSEC"/>
<dbReference type="DMDM" id="259016384"/>
<dbReference type="jPOST" id="P57772"/>
<dbReference type="MassIVE" id="P57772"/>
<dbReference type="PaxDb" id="9606-ENSP00000254730"/>
<dbReference type="PeptideAtlas" id="P57772"/>
<dbReference type="ProteomicsDB" id="57034">
    <molecule id="P57772-1"/>
</dbReference>
<dbReference type="Pumba" id="P57772"/>
<dbReference type="Antibodypedia" id="46656">
    <property type="antibodies" value="109 antibodies from 21 providers"/>
</dbReference>
<dbReference type="DNASU" id="60678"/>
<dbReference type="Ensembl" id="ENST00000254730.11">
    <molecule id="P57772-1"/>
    <property type="protein sequence ID" value="ENSP00000254730.5"/>
    <property type="gene ID" value="ENSG00000132394.11"/>
</dbReference>
<dbReference type="Ensembl" id="ENST00000644579.2">
    <molecule id="P57772-1"/>
    <property type="protein sequence ID" value="ENSP00000494933.1"/>
    <property type="gene ID" value="ENSG00000284869.2"/>
</dbReference>
<dbReference type="GeneID" id="60678"/>
<dbReference type="KEGG" id="hsa:60678"/>
<dbReference type="MANE-Select" id="ENST00000254730.11">
    <property type="protein sequence ID" value="ENSP00000254730.5"/>
    <property type="RefSeq nucleotide sequence ID" value="NM_021937.5"/>
    <property type="RefSeq protein sequence ID" value="NP_068756.2"/>
</dbReference>
<dbReference type="UCSC" id="uc003eki.4">
    <molecule id="P57772-1"/>
    <property type="organism name" value="human"/>
</dbReference>
<dbReference type="AGR" id="HGNC:24614"/>
<dbReference type="CTD" id="60678"/>
<dbReference type="DisGeNET" id="60678"/>
<dbReference type="GeneCards" id="EEFSEC"/>
<dbReference type="HGNC" id="HGNC:24614">
    <property type="gene designation" value="EEFSEC"/>
</dbReference>
<dbReference type="HPA" id="ENSG00000132394">
    <property type="expression patterns" value="Low tissue specificity"/>
</dbReference>
<dbReference type="MIM" id="607695">
    <property type="type" value="gene"/>
</dbReference>
<dbReference type="MIM" id="621102">
    <property type="type" value="phenotype"/>
</dbReference>
<dbReference type="neXtProt" id="NX_P57772"/>
<dbReference type="OpenTargets" id="ENSG00000132394"/>
<dbReference type="PharmGKB" id="PA142671916"/>
<dbReference type="VEuPathDB" id="HostDB:ENSG00000132394"/>
<dbReference type="eggNOG" id="KOG0461">
    <property type="taxonomic scope" value="Eukaryota"/>
</dbReference>
<dbReference type="GeneTree" id="ENSGT00940000158170"/>
<dbReference type="HOGENOM" id="CLU_019148_0_0_1"/>
<dbReference type="InParanoid" id="P57772"/>
<dbReference type="OMA" id="CFAIKGQ"/>
<dbReference type="OrthoDB" id="2067at2759"/>
<dbReference type="PAN-GO" id="P57772">
    <property type="GO annotations" value="2 GO annotations based on evolutionary models"/>
</dbReference>
<dbReference type="PhylomeDB" id="P57772"/>
<dbReference type="TreeFam" id="TF300432"/>
<dbReference type="PathwayCommons" id="P57772"/>
<dbReference type="Reactome" id="R-HSA-2408557">
    <property type="pathway name" value="Selenocysteine synthesis"/>
</dbReference>
<dbReference type="SignaLink" id="P57772"/>
<dbReference type="BioGRID-ORCS" id="60678">
    <property type="hits" value="296 hits in 1170 CRISPR screens"/>
</dbReference>
<dbReference type="ChiTaRS" id="EEFSEC">
    <property type="organism name" value="human"/>
</dbReference>
<dbReference type="GenomeRNAi" id="60678"/>
<dbReference type="Pharos" id="P57772">
    <property type="development level" value="Tbio"/>
</dbReference>
<dbReference type="PRO" id="PR:P57772"/>
<dbReference type="Proteomes" id="UP000005640">
    <property type="component" value="Chromosome 3"/>
</dbReference>
<dbReference type="RNAct" id="P57772">
    <property type="molecule type" value="protein"/>
</dbReference>
<dbReference type="Bgee" id="ENSG00000132394">
    <property type="expression patterns" value="Expressed in apex of heart and 99 other cell types or tissues"/>
</dbReference>
<dbReference type="ExpressionAtlas" id="P57772">
    <property type="expression patterns" value="baseline and differential"/>
</dbReference>
<dbReference type="GO" id="GO:0005737">
    <property type="term" value="C:cytoplasm"/>
    <property type="evidence" value="ECO:0007669"/>
    <property type="project" value="UniProtKB-SubCell"/>
</dbReference>
<dbReference type="GO" id="GO:0005634">
    <property type="term" value="C:nucleus"/>
    <property type="evidence" value="ECO:0007669"/>
    <property type="project" value="UniProtKB-SubCell"/>
</dbReference>
<dbReference type="GO" id="GO:1990904">
    <property type="term" value="C:ribonucleoprotein complex"/>
    <property type="evidence" value="ECO:0007669"/>
    <property type="project" value="Ensembl"/>
</dbReference>
<dbReference type="GO" id="GO:0005525">
    <property type="term" value="F:GTP binding"/>
    <property type="evidence" value="ECO:0007669"/>
    <property type="project" value="UniProtKB-KW"/>
</dbReference>
<dbReference type="GO" id="GO:0003924">
    <property type="term" value="F:GTPase activity"/>
    <property type="evidence" value="ECO:0000314"/>
    <property type="project" value="UniProtKB"/>
</dbReference>
<dbReference type="GO" id="GO:0043021">
    <property type="term" value="F:ribonucleoprotein complex binding"/>
    <property type="evidence" value="ECO:0007669"/>
    <property type="project" value="Ensembl"/>
</dbReference>
<dbReference type="GO" id="GO:0035368">
    <property type="term" value="F:selenocysteine insertion sequence binding"/>
    <property type="evidence" value="ECO:0007669"/>
    <property type="project" value="Ensembl"/>
</dbReference>
<dbReference type="GO" id="GO:0003746">
    <property type="term" value="F:translation elongation factor activity"/>
    <property type="evidence" value="ECO:0000318"/>
    <property type="project" value="GO_Central"/>
</dbReference>
<dbReference type="GO" id="GO:0000049">
    <property type="term" value="F:tRNA binding"/>
    <property type="evidence" value="ECO:0007669"/>
    <property type="project" value="Ensembl"/>
</dbReference>
<dbReference type="GO" id="GO:0001514">
    <property type="term" value="P:selenocysteine incorporation"/>
    <property type="evidence" value="ECO:0000314"/>
    <property type="project" value="UniProtKB"/>
</dbReference>
<dbReference type="CDD" id="cd04094">
    <property type="entry name" value="eSelB_III"/>
    <property type="match status" value="1"/>
</dbReference>
<dbReference type="CDD" id="cd01889">
    <property type="entry name" value="SelB_euk"/>
    <property type="match status" value="1"/>
</dbReference>
<dbReference type="CDD" id="cd03696">
    <property type="entry name" value="SelB_II"/>
    <property type="match status" value="1"/>
</dbReference>
<dbReference type="FunFam" id="3.40.50.300:FF:000900">
    <property type="entry name" value="Eukaryotic elongation factor, selenocysteine-tRNA-specific"/>
    <property type="match status" value="1"/>
</dbReference>
<dbReference type="FunFam" id="2.40.30.10:FF:000052">
    <property type="entry name" value="Selenocysteine-specific elongation factor EF-Sec"/>
    <property type="match status" value="1"/>
</dbReference>
<dbReference type="Gene3D" id="3.40.50.300">
    <property type="entry name" value="P-loop containing nucleotide triphosphate hydrolases"/>
    <property type="match status" value="1"/>
</dbReference>
<dbReference type="Gene3D" id="2.40.30.10">
    <property type="entry name" value="Translation factors"/>
    <property type="match status" value="2"/>
</dbReference>
<dbReference type="InterPro" id="IPR049394">
    <property type="entry name" value="eEFSec_C"/>
</dbReference>
<dbReference type="InterPro" id="IPR049393">
    <property type="entry name" value="eEFSec_III"/>
</dbReference>
<dbReference type="InterPro" id="IPR050055">
    <property type="entry name" value="EF-Tu_GTPase"/>
</dbReference>
<dbReference type="InterPro" id="IPR004161">
    <property type="entry name" value="EFTu-like_2"/>
</dbReference>
<dbReference type="InterPro" id="IPR027417">
    <property type="entry name" value="P-loop_NTPase"/>
</dbReference>
<dbReference type="InterPro" id="IPR000795">
    <property type="entry name" value="T_Tr_GTP-bd_dom"/>
</dbReference>
<dbReference type="InterPro" id="IPR009000">
    <property type="entry name" value="Transl_B-barrel_sf"/>
</dbReference>
<dbReference type="PANTHER" id="PTHR43721">
    <property type="entry name" value="ELONGATION FACTOR TU-RELATED"/>
    <property type="match status" value="1"/>
</dbReference>
<dbReference type="PANTHER" id="PTHR43721:SF11">
    <property type="entry name" value="SELENOCYSTEINE-SPECIFIC ELONGATION FACTOR"/>
    <property type="match status" value="1"/>
</dbReference>
<dbReference type="Pfam" id="PF21131">
    <property type="entry name" value="eEFSec_4th"/>
    <property type="match status" value="1"/>
</dbReference>
<dbReference type="Pfam" id="PF21208">
    <property type="entry name" value="euk_SelB_III"/>
    <property type="match status" value="1"/>
</dbReference>
<dbReference type="Pfam" id="PF00009">
    <property type="entry name" value="GTP_EFTU"/>
    <property type="match status" value="1"/>
</dbReference>
<dbReference type="Pfam" id="PF03144">
    <property type="entry name" value="GTP_EFTU_D2"/>
    <property type="match status" value="1"/>
</dbReference>
<dbReference type="PRINTS" id="PR00315">
    <property type="entry name" value="ELONGATNFCT"/>
</dbReference>
<dbReference type="SUPFAM" id="SSF52540">
    <property type="entry name" value="P-loop containing nucleoside triphosphate hydrolases"/>
    <property type="match status" value="1"/>
</dbReference>
<dbReference type="SUPFAM" id="SSF50447">
    <property type="entry name" value="Translation proteins"/>
    <property type="match status" value="1"/>
</dbReference>
<dbReference type="PROSITE" id="PS51722">
    <property type="entry name" value="G_TR_2"/>
    <property type="match status" value="1"/>
</dbReference>
<evidence type="ECO:0000250" key="1">
    <source>
        <dbReference type="UniProtKB" id="Q9JHW4"/>
    </source>
</evidence>
<evidence type="ECO:0000255" key="2"/>
<evidence type="ECO:0000255" key="3">
    <source>
        <dbReference type="PROSITE-ProRule" id="PRU01059"/>
    </source>
</evidence>
<evidence type="ECO:0000256" key="4">
    <source>
        <dbReference type="SAM" id="MobiDB-lite"/>
    </source>
</evidence>
<evidence type="ECO:0000269" key="5">
    <source>
    </source>
</evidence>
<evidence type="ECO:0000269" key="6">
    <source>
    </source>
</evidence>
<evidence type="ECO:0000269" key="7">
    <source>
    </source>
</evidence>
<evidence type="ECO:0000303" key="8">
    <source>
    </source>
</evidence>
<evidence type="ECO:0000303" key="9">
    <source>
    </source>
</evidence>
<evidence type="ECO:0000305" key="10"/>
<evidence type="ECO:0000305" key="11">
    <source>
    </source>
</evidence>
<evidence type="ECO:0000312" key="12">
    <source>
        <dbReference type="HGNC" id="HGNC:24614"/>
    </source>
</evidence>
<evidence type="ECO:0007744" key="13">
    <source>
        <dbReference type="PDB" id="5IZK"/>
    </source>
</evidence>
<evidence type="ECO:0007744" key="14">
    <source>
        <dbReference type="PDB" id="5IZL"/>
    </source>
</evidence>
<evidence type="ECO:0007744" key="15">
    <source>
        <dbReference type="PDB" id="5IZM"/>
    </source>
</evidence>
<evidence type="ECO:0007744" key="16">
    <source>
        <dbReference type="PDB" id="7ZJW"/>
    </source>
</evidence>
<evidence type="ECO:0007744" key="17">
    <source>
    </source>
</evidence>
<evidence type="ECO:0007829" key="18">
    <source>
        <dbReference type="PDB" id="5IZK"/>
    </source>
</evidence>
<evidence type="ECO:0007829" key="19">
    <source>
        <dbReference type="PDB" id="5IZL"/>
    </source>
</evidence>
<evidence type="ECO:0007829" key="20">
    <source>
        <dbReference type="PDB" id="5IZM"/>
    </source>
</evidence>
<name>SELB_HUMAN</name>
<keyword id="KW-0002">3D-structure</keyword>
<keyword id="KW-0025">Alternative splicing</keyword>
<keyword id="KW-0963">Cytoplasm</keyword>
<keyword id="KW-0225">Disease variant</keyword>
<keyword id="KW-0342">GTP-binding</keyword>
<keyword id="KW-0378">Hydrolase</keyword>
<keyword id="KW-0991">Intellectual disability</keyword>
<keyword id="KW-0488">Methylation</keyword>
<keyword id="KW-0523">Neurodegeneration</keyword>
<keyword id="KW-0547">Nucleotide-binding</keyword>
<keyword id="KW-0539">Nucleus</keyword>
<keyword id="KW-0597">Phosphoprotein</keyword>
<keyword id="KW-0648">Protein biosynthesis</keyword>
<keyword id="KW-1267">Proteomics identification</keyword>
<keyword id="KW-1185">Reference proteome</keyword>
<protein>
    <recommendedName>
        <fullName evidence="9">Selenocysteine-specific elongation factor</fullName>
        <ecNumber evidence="5 6">3.6.5.-</ecNumber>
    </recommendedName>
    <alternativeName>
        <fullName>Elongation factor sec</fullName>
    </alternativeName>
    <alternativeName>
        <fullName>Eukaryotic elongation factor, selenocysteine-tRNA-specific</fullName>
    </alternativeName>
</protein>
<gene>
    <name evidence="9 12" type="primary">EEFSEC</name>
    <name type="synonym">SELB</name>
</gene>
<organism>
    <name type="scientific">Homo sapiens</name>
    <name type="common">Human</name>
    <dbReference type="NCBI Taxonomy" id="9606"/>
    <lineage>
        <taxon>Eukaryota</taxon>
        <taxon>Metazoa</taxon>
        <taxon>Chordata</taxon>
        <taxon>Craniata</taxon>
        <taxon>Vertebrata</taxon>
        <taxon>Euteleostomi</taxon>
        <taxon>Mammalia</taxon>
        <taxon>Eutheria</taxon>
        <taxon>Euarchontoglires</taxon>
        <taxon>Primates</taxon>
        <taxon>Haplorrhini</taxon>
        <taxon>Catarrhini</taxon>
        <taxon>Hominidae</taxon>
        <taxon>Homo</taxon>
    </lineage>
</organism>